<dbReference type="EC" id="3.6.5.n1" evidence="1"/>
<dbReference type="EMBL" id="CP000026">
    <property type="protein sequence ID" value="AAV76304.1"/>
    <property type="molecule type" value="Genomic_DNA"/>
</dbReference>
<dbReference type="RefSeq" id="WP_000790158.1">
    <property type="nucleotide sequence ID" value="NC_006511.1"/>
</dbReference>
<dbReference type="SMR" id="Q5PNC0"/>
<dbReference type="KEGG" id="spt:SPA0282"/>
<dbReference type="HOGENOM" id="CLU_009995_3_3_6"/>
<dbReference type="Proteomes" id="UP000008185">
    <property type="component" value="Chromosome"/>
</dbReference>
<dbReference type="GO" id="GO:0005886">
    <property type="term" value="C:plasma membrane"/>
    <property type="evidence" value="ECO:0007669"/>
    <property type="project" value="UniProtKB-SubCell"/>
</dbReference>
<dbReference type="GO" id="GO:0005525">
    <property type="term" value="F:GTP binding"/>
    <property type="evidence" value="ECO:0007669"/>
    <property type="project" value="UniProtKB-UniRule"/>
</dbReference>
<dbReference type="GO" id="GO:0003924">
    <property type="term" value="F:GTPase activity"/>
    <property type="evidence" value="ECO:0007669"/>
    <property type="project" value="UniProtKB-UniRule"/>
</dbReference>
<dbReference type="GO" id="GO:0097216">
    <property type="term" value="F:guanosine tetraphosphate binding"/>
    <property type="evidence" value="ECO:0007669"/>
    <property type="project" value="UniProtKB-ARBA"/>
</dbReference>
<dbReference type="GO" id="GO:0043022">
    <property type="term" value="F:ribosome binding"/>
    <property type="evidence" value="ECO:0007669"/>
    <property type="project" value="UniProtKB-UniRule"/>
</dbReference>
<dbReference type="GO" id="GO:0003746">
    <property type="term" value="F:translation elongation factor activity"/>
    <property type="evidence" value="ECO:0007669"/>
    <property type="project" value="UniProtKB-UniRule"/>
</dbReference>
<dbReference type="GO" id="GO:0045727">
    <property type="term" value="P:positive regulation of translation"/>
    <property type="evidence" value="ECO:0007669"/>
    <property type="project" value="UniProtKB-UniRule"/>
</dbReference>
<dbReference type="CDD" id="cd03699">
    <property type="entry name" value="EF4_II"/>
    <property type="match status" value="1"/>
</dbReference>
<dbReference type="CDD" id="cd16260">
    <property type="entry name" value="EF4_III"/>
    <property type="match status" value="1"/>
</dbReference>
<dbReference type="CDD" id="cd01890">
    <property type="entry name" value="LepA"/>
    <property type="match status" value="1"/>
</dbReference>
<dbReference type="CDD" id="cd03709">
    <property type="entry name" value="lepA_C"/>
    <property type="match status" value="1"/>
</dbReference>
<dbReference type="FunFam" id="3.30.70.240:FF:000005">
    <property type="entry name" value="Elongation factor 4"/>
    <property type="match status" value="1"/>
</dbReference>
<dbReference type="FunFam" id="3.40.50.300:FF:000078">
    <property type="entry name" value="Elongation factor 4"/>
    <property type="match status" value="1"/>
</dbReference>
<dbReference type="FunFam" id="2.40.30.10:FF:000015">
    <property type="entry name" value="Translation factor GUF1, mitochondrial"/>
    <property type="match status" value="1"/>
</dbReference>
<dbReference type="FunFam" id="3.30.70.2570:FF:000001">
    <property type="entry name" value="Translation factor GUF1, mitochondrial"/>
    <property type="match status" value="1"/>
</dbReference>
<dbReference type="FunFam" id="3.30.70.870:FF:000004">
    <property type="entry name" value="Translation factor GUF1, mitochondrial"/>
    <property type="match status" value="1"/>
</dbReference>
<dbReference type="Gene3D" id="3.30.70.240">
    <property type="match status" value="1"/>
</dbReference>
<dbReference type="Gene3D" id="3.30.70.2570">
    <property type="entry name" value="Elongation factor 4, C-terminal domain"/>
    <property type="match status" value="1"/>
</dbReference>
<dbReference type="Gene3D" id="3.30.70.870">
    <property type="entry name" value="Elongation Factor G (Translational Gtpase), domain 3"/>
    <property type="match status" value="1"/>
</dbReference>
<dbReference type="Gene3D" id="3.40.50.300">
    <property type="entry name" value="P-loop containing nucleotide triphosphate hydrolases"/>
    <property type="match status" value="1"/>
</dbReference>
<dbReference type="Gene3D" id="2.40.30.10">
    <property type="entry name" value="Translation factors"/>
    <property type="match status" value="1"/>
</dbReference>
<dbReference type="HAMAP" id="MF_00071">
    <property type="entry name" value="LepA"/>
    <property type="match status" value="1"/>
</dbReference>
<dbReference type="InterPro" id="IPR006297">
    <property type="entry name" value="EF-4"/>
</dbReference>
<dbReference type="InterPro" id="IPR035647">
    <property type="entry name" value="EFG_III/V"/>
</dbReference>
<dbReference type="InterPro" id="IPR000640">
    <property type="entry name" value="EFG_V-like"/>
</dbReference>
<dbReference type="InterPro" id="IPR004161">
    <property type="entry name" value="EFTu-like_2"/>
</dbReference>
<dbReference type="InterPro" id="IPR031157">
    <property type="entry name" value="G_TR_CS"/>
</dbReference>
<dbReference type="InterPro" id="IPR038363">
    <property type="entry name" value="LepA_C_sf"/>
</dbReference>
<dbReference type="InterPro" id="IPR013842">
    <property type="entry name" value="LepA_CTD"/>
</dbReference>
<dbReference type="InterPro" id="IPR035654">
    <property type="entry name" value="LepA_IV"/>
</dbReference>
<dbReference type="InterPro" id="IPR027417">
    <property type="entry name" value="P-loop_NTPase"/>
</dbReference>
<dbReference type="InterPro" id="IPR005225">
    <property type="entry name" value="Small_GTP-bd"/>
</dbReference>
<dbReference type="InterPro" id="IPR000795">
    <property type="entry name" value="T_Tr_GTP-bd_dom"/>
</dbReference>
<dbReference type="NCBIfam" id="TIGR01393">
    <property type="entry name" value="lepA"/>
    <property type="match status" value="1"/>
</dbReference>
<dbReference type="NCBIfam" id="TIGR00231">
    <property type="entry name" value="small_GTP"/>
    <property type="match status" value="1"/>
</dbReference>
<dbReference type="PANTHER" id="PTHR43512:SF4">
    <property type="entry name" value="TRANSLATION FACTOR GUF1 HOMOLOG, CHLOROPLASTIC"/>
    <property type="match status" value="1"/>
</dbReference>
<dbReference type="PANTHER" id="PTHR43512">
    <property type="entry name" value="TRANSLATION FACTOR GUF1-RELATED"/>
    <property type="match status" value="1"/>
</dbReference>
<dbReference type="Pfam" id="PF00679">
    <property type="entry name" value="EFG_C"/>
    <property type="match status" value="1"/>
</dbReference>
<dbReference type="Pfam" id="PF00009">
    <property type="entry name" value="GTP_EFTU"/>
    <property type="match status" value="1"/>
</dbReference>
<dbReference type="Pfam" id="PF03144">
    <property type="entry name" value="GTP_EFTU_D2"/>
    <property type="match status" value="1"/>
</dbReference>
<dbReference type="Pfam" id="PF06421">
    <property type="entry name" value="LepA_C"/>
    <property type="match status" value="1"/>
</dbReference>
<dbReference type="PRINTS" id="PR00315">
    <property type="entry name" value="ELONGATNFCT"/>
</dbReference>
<dbReference type="SUPFAM" id="SSF54980">
    <property type="entry name" value="EF-G C-terminal domain-like"/>
    <property type="match status" value="2"/>
</dbReference>
<dbReference type="SUPFAM" id="SSF52540">
    <property type="entry name" value="P-loop containing nucleoside triphosphate hydrolases"/>
    <property type="match status" value="1"/>
</dbReference>
<dbReference type="PROSITE" id="PS00301">
    <property type="entry name" value="G_TR_1"/>
    <property type="match status" value="1"/>
</dbReference>
<dbReference type="PROSITE" id="PS51722">
    <property type="entry name" value="G_TR_2"/>
    <property type="match status" value="1"/>
</dbReference>
<evidence type="ECO:0000255" key="1">
    <source>
        <dbReference type="HAMAP-Rule" id="MF_00071"/>
    </source>
</evidence>
<feature type="chain" id="PRO_0000224793" description="Elongation factor 4">
    <location>
        <begin position="1"/>
        <end position="599"/>
    </location>
</feature>
<feature type="domain" description="tr-type G">
    <location>
        <begin position="2"/>
        <end position="184"/>
    </location>
</feature>
<feature type="binding site" evidence="1">
    <location>
        <begin position="14"/>
        <end position="19"/>
    </location>
    <ligand>
        <name>GTP</name>
        <dbReference type="ChEBI" id="CHEBI:37565"/>
    </ligand>
</feature>
<feature type="binding site" evidence="1">
    <location>
        <begin position="131"/>
        <end position="134"/>
    </location>
    <ligand>
        <name>GTP</name>
        <dbReference type="ChEBI" id="CHEBI:37565"/>
    </ligand>
</feature>
<organism>
    <name type="scientific">Salmonella paratyphi A (strain ATCC 9150 / SARB42)</name>
    <dbReference type="NCBI Taxonomy" id="295319"/>
    <lineage>
        <taxon>Bacteria</taxon>
        <taxon>Pseudomonadati</taxon>
        <taxon>Pseudomonadota</taxon>
        <taxon>Gammaproteobacteria</taxon>
        <taxon>Enterobacterales</taxon>
        <taxon>Enterobacteriaceae</taxon>
        <taxon>Salmonella</taxon>
    </lineage>
</organism>
<reference key="1">
    <citation type="journal article" date="2004" name="Nat. Genet.">
        <title>Comparison of genome degradation in Paratyphi A and Typhi, human-restricted serovars of Salmonella enterica that cause typhoid.</title>
        <authorList>
            <person name="McClelland M."/>
            <person name="Sanderson K.E."/>
            <person name="Clifton S.W."/>
            <person name="Latreille P."/>
            <person name="Porwollik S."/>
            <person name="Sabo A."/>
            <person name="Meyer R."/>
            <person name="Bieri T."/>
            <person name="Ozersky P."/>
            <person name="McLellan M."/>
            <person name="Harkins C.R."/>
            <person name="Wang C."/>
            <person name="Nguyen C."/>
            <person name="Berghoff A."/>
            <person name="Elliott G."/>
            <person name="Kohlberg S."/>
            <person name="Strong C."/>
            <person name="Du F."/>
            <person name="Carter J."/>
            <person name="Kremizki C."/>
            <person name="Layman D."/>
            <person name="Leonard S."/>
            <person name="Sun H."/>
            <person name="Fulton L."/>
            <person name="Nash W."/>
            <person name="Miner T."/>
            <person name="Minx P."/>
            <person name="Delehaunty K."/>
            <person name="Fronick C."/>
            <person name="Magrini V."/>
            <person name="Nhan M."/>
            <person name="Warren W."/>
            <person name="Florea L."/>
            <person name="Spieth J."/>
            <person name="Wilson R.K."/>
        </authorList>
    </citation>
    <scope>NUCLEOTIDE SEQUENCE [LARGE SCALE GENOMIC DNA]</scope>
    <source>
        <strain>ATCC 9150 / SARB42</strain>
    </source>
</reference>
<comment type="function">
    <text evidence="1">Required for accurate and efficient protein synthesis under certain stress conditions. May act as a fidelity factor of the translation reaction, by catalyzing a one-codon backward translocation of tRNAs on improperly translocated ribosomes. Back-translocation proceeds from a post-translocation (POST) complex to a pre-translocation (PRE) complex, thus giving elongation factor G a second chance to translocate the tRNAs correctly. Binds to ribosomes in a GTP-dependent manner.</text>
</comment>
<comment type="catalytic activity">
    <reaction evidence="1">
        <text>GTP + H2O = GDP + phosphate + H(+)</text>
        <dbReference type="Rhea" id="RHEA:19669"/>
        <dbReference type="ChEBI" id="CHEBI:15377"/>
        <dbReference type="ChEBI" id="CHEBI:15378"/>
        <dbReference type="ChEBI" id="CHEBI:37565"/>
        <dbReference type="ChEBI" id="CHEBI:43474"/>
        <dbReference type="ChEBI" id="CHEBI:58189"/>
        <dbReference type="EC" id="3.6.5.n1"/>
    </reaction>
</comment>
<comment type="subcellular location">
    <subcellularLocation>
        <location evidence="1">Cell inner membrane</location>
        <topology evidence="1">Peripheral membrane protein</topology>
        <orientation evidence="1">Cytoplasmic side</orientation>
    </subcellularLocation>
</comment>
<comment type="similarity">
    <text evidence="1">Belongs to the TRAFAC class translation factor GTPase superfamily. Classic translation factor GTPase family. LepA subfamily.</text>
</comment>
<protein>
    <recommendedName>
        <fullName evidence="1">Elongation factor 4</fullName>
        <shortName evidence="1">EF-4</shortName>
        <ecNumber evidence="1">3.6.5.n1</ecNumber>
    </recommendedName>
    <alternativeName>
        <fullName evidence="1">Ribosomal back-translocase LepA</fullName>
    </alternativeName>
</protein>
<sequence>MKNIRNFSIIAHIDHGKSTLSDRIIQICGGLSDREMEAQVLDSMDLERERGITIKAQSVTLDFKASDGETYQLNFIDTPGHVDFSYEVSRSLAACEGALLVVDAGQGVEAQTLANCYTAMEMDLEVVPVLNKIDLPAADPERVAEEIEDIVGIDATDAVRCSAKTGVGVTDVLERLVRDIPPPQGDPDGPLQALIIDSWFDNYLGVVSLVRIKNGTMRKGDKIKVMSTRQTYNADRLGIFTPKQVDRTELKCGEVGWLVCAIKDILGAPVGDTLTSARNPAEKALPGFKKVKPQVYAGLFPVSSDDYESFRDALGKLSLNDASLFYEPESSSALGFGFRCGFLGLLHMEIIQERLEREYDLDLITTAPTVVYEVETTAKETIYVDSPSKLPPLNNIYELREPIAECHMLLPQAYLGNVITLCIEKRGVQTNMVYHGNQVALTYEIPMAEVVLDFFDRLKSTSRGYASLDYNFKRFQASDMVRVDVLINNERVDALALITHRDNSQSRGRELVEKMKDLIPRQQFDIAIQAAIGTHIIARSTVKQLRKNVLAKCYGGDISRKKKLLQKQKEGKKRMKQIGNVELPQEAFLAILHVGKDNK</sequence>
<accession>Q5PNC0</accession>
<name>LEPA_SALPA</name>
<proteinExistence type="inferred from homology"/>
<gene>
    <name evidence="1" type="primary">lepA</name>
    <name type="ordered locus">SPA0282</name>
</gene>
<keyword id="KW-0997">Cell inner membrane</keyword>
<keyword id="KW-1003">Cell membrane</keyword>
<keyword id="KW-0342">GTP-binding</keyword>
<keyword id="KW-0378">Hydrolase</keyword>
<keyword id="KW-0472">Membrane</keyword>
<keyword id="KW-0547">Nucleotide-binding</keyword>
<keyword id="KW-0648">Protein biosynthesis</keyword>